<evidence type="ECO:0000255" key="1">
    <source>
        <dbReference type="HAMAP-Rule" id="MF_01325"/>
    </source>
</evidence>
<evidence type="ECO:0000256" key="2">
    <source>
        <dbReference type="SAM" id="MobiDB-lite"/>
    </source>
</evidence>
<evidence type="ECO:0000305" key="3"/>
<comment type="function">
    <text evidence="1">One of the primary rRNA binding proteins, it binds directly near the 3'-end of the 23S rRNA, where it nucleates assembly of the 50S subunit.</text>
</comment>
<comment type="subunit">
    <text evidence="1">Part of the 50S ribosomal subunit. Forms a cluster with proteins L14 and L19.</text>
</comment>
<comment type="PTM">
    <text evidence="1">Methylated by PrmB.</text>
</comment>
<comment type="similarity">
    <text evidence="1">Belongs to the universal ribosomal protein uL3 family.</text>
</comment>
<organism>
    <name type="scientific">Phenylobacterium zucineum (strain HLK1)</name>
    <dbReference type="NCBI Taxonomy" id="450851"/>
    <lineage>
        <taxon>Bacteria</taxon>
        <taxon>Pseudomonadati</taxon>
        <taxon>Pseudomonadota</taxon>
        <taxon>Alphaproteobacteria</taxon>
        <taxon>Caulobacterales</taxon>
        <taxon>Caulobacteraceae</taxon>
        <taxon>Phenylobacterium</taxon>
    </lineage>
</organism>
<accession>B4R8L7</accession>
<dbReference type="EMBL" id="CP000747">
    <property type="protein sequence ID" value="ACG77644.1"/>
    <property type="molecule type" value="Genomic_DNA"/>
</dbReference>
<dbReference type="RefSeq" id="WP_012521788.1">
    <property type="nucleotide sequence ID" value="NC_011144.1"/>
</dbReference>
<dbReference type="SMR" id="B4R8L7"/>
<dbReference type="STRING" id="450851.PHZ_c1230"/>
<dbReference type="KEGG" id="pzu:PHZ_c1230"/>
<dbReference type="eggNOG" id="COG0087">
    <property type="taxonomic scope" value="Bacteria"/>
</dbReference>
<dbReference type="HOGENOM" id="CLU_044142_2_0_5"/>
<dbReference type="OrthoDB" id="9806135at2"/>
<dbReference type="Proteomes" id="UP000001868">
    <property type="component" value="Chromosome"/>
</dbReference>
<dbReference type="GO" id="GO:0022625">
    <property type="term" value="C:cytosolic large ribosomal subunit"/>
    <property type="evidence" value="ECO:0007669"/>
    <property type="project" value="TreeGrafter"/>
</dbReference>
<dbReference type="GO" id="GO:0019843">
    <property type="term" value="F:rRNA binding"/>
    <property type="evidence" value="ECO:0007669"/>
    <property type="project" value="UniProtKB-UniRule"/>
</dbReference>
<dbReference type="GO" id="GO:0003735">
    <property type="term" value="F:structural constituent of ribosome"/>
    <property type="evidence" value="ECO:0007669"/>
    <property type="project" value="InterPro"/>
</dbReference>
<dbReference type="GO" id="GO:0006412">
    <property type="term" value="P:translation"/>
    <property type="evidence" value="ECO:0007669"/>
    <property type="project" value="UniProtKB-UniRule"/>
</dbReference>
<dbReference type="FunFam" id="2.40.30.10:FF:000004">
    <property type="entry name" value="50S ribosomal protein L3"/>
    <property type="match status" value="1"/>
</dbReference>
<dbReference type="FunFam" id="3.30.160.810:FF:000001">
    <property type="entry name" value="50S ribosomal protein L3"/>
    <property type="match status" value="1"/>
</dbReference>
<dbReference type="Gene3D" id="3.30.160.810">
    <property type="match status" value="1"/>
</dbReference>
<dbReference type="Gene3D" id="2.40.30.10">
    <property type="entry name" value="Translation factors"/>
    <property type="match status" value="1"/>
</dbReference>
<dbReference type="HAMAP" id="MF_01325_B">
    <property type="entry name" value="Ribosomal_uL3_B"/>
    <property type="match status" value="1"/>
</dbReference>
<dbReference type="InterPro" id="IPR000597">
    <property type="entry name" value="Ribosomal_uL3"/>
</dbReference>
<dbReference type="InterPro" id="IPR019927">
    <property type="entry name" value="Ribosomal_uL3_bac/org-type"/>
</dbReference>
<dbReference type="InterPro" id="IPR019926">
    <property type="entry name" value="Ribosomal_uL3_CS"/>
</dbReference>
<dbReference type="InterPro" id="IPR009000">
    <property type="entry name" value="Transl_B-barrel_sf"/>
</dbReference>
<dbReference type="NCBIfam" id="TIGR03625">
    <property type="entry name" value="L3_bact"/>
    <property type="match status" value="1"/>
</dbReference>
<dbReference type="PANTHER" id="PTHR11229">
    <property type="entry name" value="50S RIBOSOMAL PROTEIN L3"/>
    <property type="match status" value="1"/>
</dbReference>
<dbReference type="PANTHER" id="PTHR11229:SF16">
    <property type="entry name" value="LARGE RIBOSOMAL SUBUNIT PROTEIN UL3C"/>
    <property type="match status" value="1"/>
</dbReference>
<dbReference type="Pfam" id="PF00297">
    <property type="entry name" value="Ribosomal_L3"/>
    <property type="match status" value="1"/>
</dbReference>
<dbReference type="SUPFAM" id="SSF50447">
    <property type="entry name" value="Translation proteins"/>
    <property type="match status" value="1"/>
</dbReference>
<dbReference type="PROSITE" id="PS00474">
    <property type="entry name" value="RIBOSOMAL_L3"/>
    <property type="match status" value="1"/>
</dbReference>
<sequence length="261" mass="27208">MRTGVIAKKLGMARFFDEAGVHVPVTVLSLEGCQVVAHRTKDKDGYVALQLGAGSKKPKNTSKGLRGHFAKGQVEPKAKLVEFKVSEDNLIDVGAELTADHFVPGQKVDITGTTVGKGFAGAMKRWNFGGLRATHGVSVSHRSHGSTGQRQDPGRTFPGKKMAGHYGQETVTTLNLTVWRVDAERGLILVKGAVPGTEGTFVKIRDAVKAALPADAPKPGAFRGAGAPTPVEAAADEAAPAEEPAVTEAPAAEATEAGDQA</sequence>
<reference key="1">
    <citation type="journal article" date="2008" name="BMC Genomics">
        <title>Complete genome of Phenylobacterium zucineum - a novel facultative intracellular bacterium isolated from human erythroleukemia cell line K562.</title>
        <authorList>
            <person name="Luo Y."/>
            <person name="Xu X."/>
            <person name="Ding Z."/>
            <person name="Liu Z."/>
            <person name="Zhang B."/>
            <person name="Yan Z."/>
            <person name="Sun J."/>
            <person name="Hu S."/>
            <person name="Hu X."/>
        </authorList>
    </citation>
    <scope>NUCLEOTIDE SEQUENCE [LARGE SCALE GENOMIC DNA]</scope>
    <source>
        <strain>HLK1</strain>
    </source>
</reference>
<protein>
    <recommendedName>
        <fullName evidence="1">Large ribosomal subunit protein uL3</fullName>
    </recommendedName>
    <alternativeName>
        <fullName evidence="3">50S ribosomal protein L3</fullName>
    </alternativeName>
</protein>
<keyword id="KW-0488">Methylation</keyword>
<keyword id="KW-1185">Reference proteome</keyword>
<keyword id="KW-0687">Ribonucleoprotein</keyword>
<keyword id="KW-0689">Ribosomal protein</keyword>
<keyword id="KW-0694">RNA-binding</keyword>
<keyword id="KW-0699">rRNA-binding</keyword>
<proteinExistence type="inferred from homology"/>
<feature type="chain" id="PRO_1000141897" description="Large ribosomal subunit protein uL3">
    <location>
        <begin position="1"/>
        <end position="261"/>
    </location>
</feature>
<feature type="region of interest" description="Disordered" evidence="2">
    <location>
        <begin position="138"/>
        <end position="163"/>
    </location>
</feature>
<feature type="region of interest" description="Disordered" evidence="2">
    <location>
        <begin position="214"/>
        <end position="261"/>
    </location>
</feature>
<feature type="compositionally biased region" description="Low complexity" evidence="2">
    <location>
        <begin position="138"/>
        <end position="148"/>
    </location>
</feature>
<feature type="compositionally biased region" description="Low complexity" evidence="2">
    <location>
        <begin position="227"/>
        <end position="261"/>
    </location>
</feature>
<feature type="modified residue" description="N5-methylglutamine" evidence="1">
    <location>
        <position position="151"/>
    </location>
</feature>
<gene>
    <name evidence="1" type="primary">rplC</name>
    <name type="ordered locus">PHZ_c1230</name>
</gene>
<name>RL3_PHEZH</name>